<comment type="function">
    <text evidence="1">This protein is one of the early assembly proteins of the 50S ribosomal subunit, although it is not seen to bind rRNA by itself. It is important during the early stages of 50S assembly.</text>
</comment>
<comment type="subunit">
    <text evidence="1">Part of the 50S ribosomal subunit.</text>
</comment>
<comment type="similarity">
    <text evidence="1">Belongs to the universal ribosomal protein uL13 family.</text>
</comment>
<sequence length="142" mass="15743">MKTFTATPETVTRDWFVVDADGKTLGRIATEIALRLRGKHKPEYTPHVDTGDYIIVINAEKVTVTGNKAQGKTYYSHSGFPGGIKQISFEKLQAHKPEMIIEKAVKGMLPKGPLGRAMFRKLKVYAGAEHNHAAQQPQVLDI</sequence>
<evidence type="ECO:0000255" key="1">
    <source>
        <dbReference type="HAMAP-Rule" id="MF_01366"/>
    </source>
</evidence>
<evidence type="ECO:0000305" key="2"/>
<dbReference type="EMBL" id="CP000444">
    <property type="protein sequence ID" value="ABI41680.1"/>
    <property type="molecule type" value="Genomic_DNA"/>
</dbReference>
<dbReference type="SMR" id="Q0HYX5"/>
<dbReference type="KEGG" id="shm:Shewmr7_0678"/>
<dbReference type="HOGENOM" id="CLU_082184_2_2_6"/>
<dbReference type="GO" id="GO:0022625">
    <property type="term" value="C:cytosolic large ribosomal subunit"/>
    <property type="evidence" value="ECO:0007669"/>
    <property type="project" value="TreeGrafter"/>
</dbReference>
<dbReference type="GO" id="GO:0003729">
    <property type="term" value="F:mRNA binding"/>
    <property type="evidence" value="ECO:0007669"/>
    <property type="project" value="TreeGrafter"/>
</dbReference>
<dbReference type="GO" id="GO:0003735">
    <property type="term" value="F:structural constituent of ribosome"/>
    <property type="evidence" value="ECO:0007669"/>
    <property type="project" value="InterPro"/>
</dbReference>
<dbReference type="GO" id="GO:0017148">
    <property type="term" value="P:negative regulation of translation"/>
    <property type="evidence" value="ECO:0007669"/>
    <property type="project" value="TreeGrafter"/>
</dbReference>
<dbReference type="GO" id="GO:0006412">
    <property type="term" value="P:translation"/>
    <property type="evidence" value="ECO:0007669"/>
    <property type="project" value="UniProtKB-UniRule"/>
</dbReference>
<dbReference type="CDD" id="cd00392">
    <property type="entry name" value="Ribosomal_L13"/>
    <property type="match status" value="1"/>
</dbReference>
<dbReference type="FunFam" id="3.90.1180.10:FF:000001">
    <property type="entry name" value="50S ribosomal protein L13"/>
    <property type="match status" value="1"/>
</dbReference>
<dbReference type="Gene3D" id="3.90.1180.10">
    <property type="entry name" value="Ribosomal protein L13"/>
    <property type="match status" value="1"/>
</dbReference>
<dbReference type="HAMAP" id="MF_01366">
    <property type="entry name" value="Ribosomal_uL13"/>
    <property type="match status" value="1"/>
</dbReference>
<dbReference type="InterPro" id="IPR005822">
    <property type="entry name" value="Ribosomal_uL13"/>
</dbReference>
<dbReference type="InterPro" id="IPR005823">
    <property type="entry name" value="Ribosomal_uL13_bac-type"/>
</dbReference>
<dbReference type="InterPro" id="IPR023563">
    <property type="entry name" value="Ribosomal_uL13_CS"/>
</dbReference>
<dbReference type="InterPro" id="IPR036899">
    <property type="entry name" value="Ribosomal_uL13_sf"/>
</dbReference>
<dbReference type="NCBIfam" id="TIGR01066">
    <property type="entry name" value="rplM_bact"/>
    <property type="match status" value="1"/>
</dbReference>
<dbReference type="PANTHER" id="PTHR11545:SF2">
    <property type="entry name" value="LARGE RIBOSOMAL SUBUNIT PROTEIN UL13M"/>
    <property type="match status" value="1"/>
</dbReference>
<dbReference type="PANTHER" id="PTHR11545">
    <property type="entry name" value="RIBOSOMAL PROTEIN L13"/>
    <property type="match status" value="1"/>
</dbReference>
<dbReference type="Pfam" id="PF00572">
    <property type="entry name" value="Ribosomal_L13"/>
    <property type="match status" value="1"/>
</dbReference>
<dbReference type="PIRSF" id="PIRSF002181">
    <property type="entry name" value="Ribosomal_L13"/>
    <property type="match status" value="1"/>
</dbReference>
<dbReference type="SUPFAM" id="SSF52161">
    <property type="entry name" value="Ribosomal protein L13"/>
    <property type="match status" value="1"/>
</dbReference>
<dbReference type="PROSITE" id="PS00783">
    <property type="entry name" value="RIBOSOMAL_L13"/>
    <property type="match status" value="1"/>
</dbReference>
<gene>
    <name evidence="1" type="primary">rplM</name>
    <name type="ordered locus">Shewmr7_0678</name>
</gene>
<keyword id="KW-0687">Ribonucleoprotein</keyword>
<keyword id="KW-0689">Ribosomal protein</keyword>
<name>RL13_SHESR</name>
<reference key="1">
    <citation type="submission" date="2006-08" db="EMBL/GenBank/DDBJ databases">
        <title>Complete sequence of chromosome 1 of Shewanella sp. MR-7.</title>
        <authorList>
            <person name="Copeland A."/>
            <person name="Lucas S."/>
            <person name="Lapidus A."/>
            <person name="Barry K."/>
            <person name="Detter J.C."/>
            <person name="Glavina del Rio T."/>
            <person name="Hammon N."/>
            <person name="Israni S."/>
            <person name="Dalin E."/>
            <person name="Tice H."/>
            <person name="Pitluck S."/>
            <person name="Kiss H."/>
            <person name="Brettin T."/>
            <person name="Bruce D."/>
            <person name="Han C."/>
            <person name="Tapia R."/>
            <person name="Gilna P."/>
            <person name="Schmutz J."/>
            <person name="Larimer F."/>
            <person name="Land M."/>
            <person name="Hauser L."/>
            <person name="Kyrpides N."/>
            <person name="Mikhailova N."/>
            <person name="Nealson K."/>
            <person name="Konstantinidis K."/>
            <person name="Klappenbach J."/>
            <person name="Tiedje J."/>
            <person name="Richardson P."/>
        </authorList>
    </citation>
    <scope>NUCLEOTIDE SEQUENCE [LARGE SCALE GENOMIC DNA]</scope>
    <source>
        <strain>MR-7</strain>
    </source>
</reference>
<accession>Q0HYX5</accession>
<protein>
    <recommendedName>
        <fullName evidence="1">Large ribosomal subunit protein uL13</fullName>
    </recommendedName>
    <alternativeName>
        <fullName evidence="2">50S ribosomal protein L13</fullName>
    </alternativeName>
</protein>
<proteinExistence type="inferred from homology"/>
<organism>
    <name type="scientific">Shewanella sp. (strain MR-7)</name>
    <dbReference type="NCBI Taxonomy" id="60481"/>
    <lineage>
        <taxon>Bacteria</taxon>
        <taxon>Pseudomonadati</taxon>
        <taxon>Pseudomonadota</taxon>
        <taxon>Gammaproteobacteria</taxon>
        <taxon>Alteromonadales</taxon>
        <taxon>Shewanellaceae</taxon>
        <taxon>Shewanella</taxon>
    </lineage>
</organism>
<feature type="chain" id="PRO_0000261797" description="Large ribosomal subunit protein uL13">
    <location>
        <begin position="1"/>
        <end position="142"/>
    </location>
</feature>